<gene>
    <name type="primary">gumD</name>
</gene>
<reference key="1">
    <citation type="submission" date="1995-04" db="EMBL/GenBank/DDBJ databases">
        <title>Recombinant-DNA mediated production of xanthan gum.</title>
        <authorList>
            <person name="Capage M.A."/>
            <person name="Doherty D.H."/>
            <person name="Betlach M.R."/>
            <person name="Vanderslice R.W."/>
        </authorList>
    </citation>
    <scope>NUCLEOTIDE SEQUENCE [GENOMIC DNA]</scope>
    <source>
        <strain>ATCC 13951 / NCIB 11803 / NRRL B-1459</strain>
    </source>
</reference>
<reference key="2">
    <citation type="journal article" date="1998" name="J. Bacteriol.">
        <title>Xanthomonas campestris pv. campestris gum mutants: effects on xanthan biosynthesis and plant virulence.</title>
        <authorList>
            <person name="Katzen F."/>
            <person name="Ferreiro D.U."/>
            <person name="Oddo C.G."/>
            <person name="Ielmini M.V."/>
            <person name="Becker A."/>
            <person name="Puhler A."/>
            <person name="Ielpi L."/>
        </authorList>
    </citation>
    <scope>FUNCTION IN XANTHAN BIOSYNTHESIS</scope>
    <scope>DISRUPTION PHENOTYPE</scope>
    <scope>PATHWAY</scope>
    <scope>DOMAIN</scope>
    <source>
        <strain>ATCC 13951 / NCIB 11803 / NRRL B-1459</strain>
    </source>
</reference>
<name>GUMD_XANCE</name>
<protein>
    <recommendedName>
        <fullName>UDP-glucose:undecaprenyl-phosphate glucose-1-phosphate transferase</fullName>
        <shortName>UDP-Glc:Und-P Glc-1-P transferase</shortName>
        <ecNumber>2.7.8.31</ecNumber>
    </recommendedName>
    <alternativeName>
        <fullName>Glucosyl-P-P-undecaprenol synthase</fullName>
    </alternativeName>
</protein>
<sequence length="484" mass="54636">MLLADLSSATYTTSSPRLLSKYSAAADLVLRVFDLTMVVASGLIAYRIVFGTWVPAAPYRVAIATTLLYSVICFALFPLYRSWRGRGLLSELVVLGGAFGGVFALFAVHALIVQVGEQVSRGWVGLWFVGGLVSLVAARTLLRGFLNHLRTQGVDVQRVVVVGLRHPVMKISHYLSRNPWVGMNMVGYFRTPYDLAVAEQRQGLPCLGDPDELIEYLKNNQVEQVWISLPLGERDHIKQLLQRLDRYPINVKLVPDLFDFGLLNQSAEQIGSVPVINLRQGGVDRDNYFVVAKALQDKILAVIALMGLWPLMLAIAVGVKMSSPGPVFFRQRRHGLGGREFYMFKFRSMRVHDDHGTTIQQATKNDTRITRFGSFLRRSSLDELPQIFNVLGGSMSIVGPRPHAAQHNTHYEKLINHYMQRHYVKPGITGWAQVNGFRGETPELRTMKKRIQYDLDYIRRWSLWLDIRIIVLTAVRVLGQKTAY</sequence>
<keyword id="KW-0997">Cell inner membrane</keyword>
<keyword id="KW-1003">Cell membrane</keyword>
<keyword id="KW-0270">Exopolysaccharide synthesis</keyword>
<keyword id="KW-0472">Membrane</keyword>
<keyword id="KW-0808">Transferase</keyword>
<keyword id="KW-0812">Transmembrane</keyword>
<keyword id="KW-1133">Transmembrane helix</keyword>
<organism>
    <name type="scientific">Xanthomonas campestris pv. campestris</name>
    <dbReference type="NCBI Taxonomy" id="340"/>
    <lineage>
        <taxon>Bacteria</taxon>
        <taxon>Pseudomonadati</taxon>
        <taxon>Pseudomonadota</taxon>
        <taxon>Gammaproteobacteria</taxon>
        <taxon>Lysobacterales</taxon>
        <taxon>Lysobacteraceae</taxon>
        <taxon>Xanthomonas</taxon>
    </lineage>
</organism>
<proteinExistence type="evidence at protein level"/>
<accession>Q56770</accession>
<dbReference type="EC" id="2.7.8.31"/>
<dbReference type="EMBL" id="U22511">
    <property type="protein sequence ID" value="AAA86372.1"/>
    <property type="molecule type" value="Genomic_DNA"/>
</dbReference>
<dbReference type="PIR" id="S67820">
    <property type="entry name" value="S67820"/>
</dbReference>
<dbReference type="RefSeq" id="WP_057672146.1">
    <property type="nucleotide sequence ID" value="NZ_JBGOGD010000022.1"/>
</dbReference>
<dbReference type="SMR" id="Q56770"/>
<dbReference type="BioCyc" id="MetaCyc:MONOMER-15979"/>
<dbReference type="UniPathway" id="UPA01017"/>
<dbReference type="GO" id="GO:0005886">
    <property type="term" value="C:plasma membrane"/>
    <property type="evidence" value="ECO:0007669"/>
    <property type="project" value="UniProtKB-SubCell"/>
</dbReference>
<dbReference type="GO" id="GO:0089702">
    <property type="term" value="F:undecaprenyl-phosphate glucose phosphotransferase activity"/>
    <property type="evidence" value="ECO:0007669"/>
    <property type="project" value="UniProtKB-EC"/>
</dbReference>
<dbReference type="GO" id="GO:0009242">
    <property type="term" value="P:colanic acid biosynthetic process"/>
    <property type="evidence" value="ECO:0007669"/>
    <property type="project" value="TreeGrafter"/>
</dbReference>
<dbReference type="GO" id="GO:0000271">
    <property type="term" value="P:polysaccharide biosynthetic process"/>
    <property type="evidence" value="ECO:0007669"/>
    <property type="project" value="UniProtKB-KW"/>
</dbReference>
<dbReference type="Gene3D" id="3.40.50.720">
    <property type="entry name" value="NAD(P)-binding Rossmann-like Domain"/>
    <property type="match status" value="1"/>
</dbReference>
<dbReference type="InterPro" id="IPR003362">
    <property type="entry name" value="Bact_transf"/>
</dbReference>
<dbReference type="InterPro" id="IPR017475">
    <property type="entry name" value="EPS_sugar_tfrase"/>
</dbReference>
<dbReference type="InterPro" id="IPR017473">
    <property type="entry name" value="Undecaprenyl-P_gluc_Ptfrase"/>
</dbReference>
<dbReference type="NCBIfam" id="TIGR03025">
    <property type="entry name" value="EPS_sugtrans"/>
    <property type="match status" value="1"/>
</dbReference>
<dbReference type="NCBIfam" id="TIGR03023">
    <property type="entry name" value="WcaJ_sugtrans"/>
    <property type="match status" value="1"/>
</dbReference>
<dbReference type="PANTHER" id="PTHR30576">
    <property type="entry name" value="COLANIC BIOSYNTHESIS UDP-GLUCOSE LIPID CARRIER TRANSFERASE"/>
    <property type="match status" value="1"/>
</dbReference>
<dbReference type="PANTHER" id="PTHR30576:SF21">
    <property type="entry name" value="UDP-GLUCOSE:UNDECAPRENYL-PHOSPHATE GLUCOSE-1-PHOSPHATE TRANSFERASE"/>
    <property type="match status" value="1"/>
</dbReference>
<dbReference type="Pfam" id="PF02397">
    <property type="entry name" value="Bac_transf"/>
    <property type="match status" value="1"/>
</dbReference>
<dbReference type="Pfam" id="PF13727">
    <property type="entry name" value="CoA_binding_3"/>
    <property type="match status" value="1"/>
</dbReference>
<comment type="function">
    <text evidence="3">Is the initiating enzyme for the synthesis of the exopolysaccharide xanthan. Catalyzes the transfer of the glucose-1-phosphate moiety from UDP-Glc onto the carrier lipid undecaprenyl phosphate (C55-P), forming a phosphoanhydride bond yielding to glucosyl-pyrophosphoryl-undecaprenol (Glc-PP-C55).</text>
</comment>
<comment type="catalytic activity">
    <reaction>
        <text>di-trans,octa-cis-undecaprenyl phosphate + UDP-alpha-D-glucose = alpha-D-glucosyl di-trans,octa-cis-undecaprenyl diphosphate + UMP</text>
        <dbReference type="Rhea" id="RHEA:28126"/>
        <dbReference type="ChEBI" id="CHEBI:57865"/>
        <dbReference type="ChEBI" id="CHEBI:58885"/>
        <dbReference type="ChEBI" id="CHEBI:60392"/>
        <dbReference type="ChEBI" id="CHEBI:61254"/>
        <dbReference type="EC" id="2.7.8.31"/>
    </reaction>
</comment>
<comment type="pathway">
    <text evidence="3">Glycan biosynthesis; xanthan biosynthesis.</text>
</comment>
<comment type="subcellular location">
    <subcellularLocation>
        <location evidence="1">Cell inner membrane</location>
        <topology evidence="1">Multi-pass membrane protein</topology>
    </subcellularLocation>
</comment>
<comment type="domain">
    <text evidence="3">The C-terminal domain is sufficient for glucosyl-1-phosphate transferase activity.</text>
</comment>
<comment type="disruption phenotype">
    <text evidence="3">Cells lacking this gene fail to synthesize any xanthan biosynthetic lipid sugar intermediates. They do not produce xanthan and exhibit a 50% virulence index reduction.</text>
</comment>
<comment type="similarity">
    <text evidence="4">Belongs to the bacterial sugar transferase family.</text>
</comment>
<evidence type="ECO:0000250" key="1"/>
<evidence type="ECO:0000255" key="2"/>
<evidence type="ECO:0000269" key="3">
    <source>
    </source>
</evidence>
<evidence type="ECO:0000305" key="4"/>
<feature type="chain" id="PRO_0000422392" description="UDP-glucose:undecaprenyl-phosphate glucose-1-phosphate transferase">
    <location>
        <begin position="1"/>
        <end position="484"/>
    </location>
</feature>
<feature type="transmembrane region" description="Helical" evidence="2">
    <location>
        <begin position="37"/>
        <end position="57"/>
    </location>
</feature>
<feature type="transmembrane region" description="Helical" evidence="2">
    <location>
        <begin position="59"/>
        <end position="79"/>
    </location>
</feature>
<feature type="transmembrane region" description="Helical" evidence="2">
    <location>
        <begin position="93"/>
        <end position="113"/>
    </location>
</feature>
<feature type="transmembrane region" description="Helical" evidence="2">
    <location>
        <begin position="122"/>
        <end position="142"/>
    </location>
</feature>
<feature type="transmembrane region" description="Helical" evidence="2">
    <location>
        <begin position="299"/>
        <end position="319"/>
    </location>
</feature>